<proteinExistence type="inferred from homology"/>
<name>RL17_LEGPH</name>
<organism>
    <name type="scientific">Legionella pneumophila subsp. pneumophila (strain Philadelphia 1 / ATCC 33152 / DSM 7513)</name>
    <dbReference type="NCBI Taxonomy" id="272624"/>
    <lineage>
        <taxon>Bacteria</taxon>
        <taxon>Pseudomonadati</taxon>
        <taxon>Pseudomonadota</taxon>
        <taxon>Gammaproteobacteria</taxon>
        <taxon>Legionellales</taxon>
        <taxon>Legionellaceae</taxon>
        <taxon>Legionella</taxon>
    </lineage>
</organism>
<comment type="subunit">
    <text evidence="1">Part of the 50S ribosomal subunit. Contacts protein L32.</text>
</comment>
<comment type="similarity">
    <text evidence="1">Belongs to the bacterial ribosomal protein bL17 family.</text>
</comment>
<accession>Q5ZYL7</accession>
<reference key="1">
    <citation type="journal article" date="2004" name="Science">
        <title>The genomic sequence of the accidental pathogen Legionella pneumophila.</title>
        <authorList>
            <person name="Chien M."/>
            <person name="Morozova I."/>
            <person name="Shi S."/>
            <person name="Sheng H."/>
            <person name="Chen J."/>
            <person name="Gomez S.M."/>
            <person name="Asamani G."/>
            <person name="Hill K."/>
            <person name="Nuara J."/>
            <person name="Feder M."/>
            <person name="Rineer J."/>
            <person name="Greenberg J.J."/>
            <person name="Steshenko V."/>
            <person name="Park S.H."/>
            <person name="Zhao B."/>
            <person name="Teplitskaya E."/>
            <person name="Edwards J.R."/>
            <person name="Pampou S."/>
            <person name="Georghiou A."/>
            <person name="Chou I.-C."/>
            <person name="Iannuccilli W."/>
            <person name="Ulz M.E."/>
            <person name="Kim D.H."/>
            <person name="Geringer-Sameth A."/>
            <person name="Goldsberry C."/>
            <person name="Morozov P."/>
            <person name="Fischer S.G."/>
            <person name="Segal G."/>
            <person name="Qu X."/>
            <person name="Rzhetsky A."/>
            <person name="Zhang P."/>
            <person name="Cayanis E."/>
            <person name="De Jong P.J."/>
            <person name="Ju J."/>
            <person name="Kalachikov S."/>
            <person name="Shuman H.A."/>
            <person name="Russo J.J."/>
        </authorList>
    </citation>
    <scope>NUCLEOTIDE SEQUENCE [LARGE SCALE GENOMIC DNA]</scope>
    <source>
        <strain>Philadelphia 1 / ATCC 33152 / DSM 7513</strain>
    </source>
</reference>
<gene>
    <name evidence="1" type="primary">rplQ</name>
    <name type="ordered locus">lpg0355</name>
</gene>
<sequence>MRHRNSGRSFSRTSSHRKAMFSNMCCSLIEHELIRTTLPKAKDLRRYIEPLITVSKSDSVASRRRAFDILRSKSAVGKLFTDLGPRFAKRPGGYIRIIKCGYRDGDNAPMAIVELMDRPVSSDDTEE</sequence>
<dbReference type="EMBL" id="AE017354">
    <property type="protein sequence ID" value="AAU26452.1"/>
    <property type="molecule type" value="Genomic_DNA"/>
</dbReference>
<dbReference type="RefSeq" id="WP_010946104.1">
    <property type="nucleotide sequence ID" value="NC_002942.5"/>
</dbReference>
<dbReference type="RefSeq" id="YP_094399.1">
    <property type="nucleotide sequence ID" value="NC_002942.5"/>
</dbReference>
<dbReference type="SMR" id="Q5ZYL7"/>
<dbReference type="STRING" id="272624.lpg0355"/>
<dbReference type="PaxDb" id="272624-lpg0355"/>
<dbReference type="GeneID" id="57034358"/>
<dbReference type="KEGG" id="lpn:lpg0355"/>
<dbReference type="PATRIC" id="fig|272624.6.peg.362"/>
<dbReference type="eggNOG" id="COG0203">
    <property type="taxonomic scope" value="Bacteria"/>
</dbReference>
<dbReference type="HOGENOM" id="CLU_074407_2_0_6"/>
<dbReference type="OrthoDB" id="9809073at2"/>
<dbReference type="Proteomes" id="UP000000609">
    <property type="component" value="Chromosome"/>
</dbReference>
<dbReference type="GO" id="GO:0022625">
    <property type="term" value="C:cytosolic large ribosomal subunit"/>
    <property type="evidence" value="ECO:0007669"/>
    <property type="project" value="TreeGrafter"/>
</dbReference>
<dbReference type="GO" id="GO:0003735">
    <property type="term" value="F:structural constituent of ribosome"/>
    <property type="evidence" value="ECO:0007669"/>
    <property type="project" value="InterPro"/>
</dbReference>
<dbReference type="GO" id="GO:0006412">
    <property type="term" value="P:translation"/>
    <property type="evidence" value="ECO:0007669"/>
    <property type="project" value="UniProtKB-UniRule"/>
</dbReference>
<dbReference type="FunFam" id="3.90.1030.10:FF:000001">
    <property type="entry name" value="50S ribosomal protein L17"/>
    <property type="match status" value="1"/>
</dbReference>
<dbReference type="Gene3D" id="3.90.1030.10">
    <property type="entry name" value="Ribosomal protein L17"/>
    <property type="match status" value="1"/>
</dbReference>
<dbReference type="HAMAP" id="MF_01368">
    <property type="entry name" value="Ribosomal_bL17"/>
    <property type="match status" value="1"/>
</dbReference>
<dbReference type="InterPro" id="IPR000456">
    <property type="entry name" value="Ribosomal_bL17"/>
</dbReference>
<dbReference type="InterPro" id="IPR047859">
    <property type="entry name" value="Ribosomal_bL17_CS"/>
</dbReference>
<dbReference type="InterPro" id="IPR036373">
    <property type="entry name" value="Ribosomal_bL17_sf"/>
</dbReference>
<dbReference type="NCBIfam" id="TIGR00059">
    <property type="entry name" value="L17"/>
    <property type="match status" value="1"/>
</dbReference>
<dbReference type="PANTHER" id="PTHR14413:SF16">
    <property type="entry name" value="LARGE RIBOSOMAL SUBUNIT PROTEIN BL17M"/>
    <property type="match status" value="1"/>
</dbReference>
<dbReference type="PANTHER" id="PTHR14413">
    <property type="entry name" value="RIBOSOMAL PROTEIN L17"/>
    <property type="match status" value="1"/>
</dbReference>
<dbReference type="Pfam" id="PF01196">
    <property type="entry name" value="Ribosomal_L17"/>
    <property type="match status" value="1"/>
</dbReference>
<dbReference type="SUPFAM" id="SSF64263">
    <property type="entry name" value="Prokaryotic ribosomal protein L17"/>
    <property type="match status" value="1"/>
</dbReference>
<dbReference type="PROSITE" id="PS01167">
    <property type="entry name" value="RIBOSOMAL_L17"/>
    <property type="match status" value="1"/>
</dbReference>
<keyword id="KW-1185">Reference proteome</keyword>
<keyword id="KW-0687">Ribonucleoprotein</keyword>
<keyword id="KW-0689">Ribosomal protein</keyword>
<feature type="chain" id="PRO_0000267888" description="Large ribosomal subunit protein bL17">
    <location>
        <begin position="1"/>
        <end position="127"/>
    </location>
</feature>
<protein>
    <recommendedName>
        <fullName evidence="1">Large ribosomal subunit protein bL17</fullName>
    </recommendedName>
    <alternativeName>
        <fullName evidence="2">50S ribosomal protein L17</fullName>
    </alternativeName>
</protein>
<evidence type="ECO:0000255" key="1">
    <source>
        <dbReference type="HAMAP-Rule" id="MF_01368"/>
    </source>
</evidence>
<evidence type="ECO:0000305" key="2"/>